<protein>
    <recommendedName>
        <fullName>Insulin</fullName>
    </recommendedName>
    <component>
        <recommendedName>
            <fullName>Insulin B chain</fullName>
        </recommendedName>
    </component>
    <component>
        <recommendedName>
            <fullName>Insulin A chain</fullName>
        </recommendedName>
    </component>
</protein>
<comment type="function">
    <text>Insulin decreases blood glucose concentration. It increases cell permeability to monosaccharides, amino acids and fatty acids. It accelerates glycolysis, the pentose phosphate cycle, and glycogen synthesis in liver.</text>
</comment>
<comment type="subunit">
    <text>Heterodimer of a B chain and an A chain linked by two disulfide bonds.</text>
</comment>
<comment type="subcellular location">
    <subcellularLocation>
        <location>Secreted</location>
    </subcellularLocation>
</comment>
<comment type="similarity">
    <text evidence="2">Belongs to the insulin family.</text>
</comment>
<comment type="caution">
    <text evidence="2">X's at positions 31-32 and 59-60 represent paired basic residues assumed by homology to be present in the precursor molecule.</text>
</comment>
<accession>P01333</accession>
<feature type="peptide" id="PRO_0000015746" description="Insulin B chain" evidence="1">
    <location>
        <begin position="1"/>
        <end position="30"/>
    </location>
</feature>
<feature type="propeptide" id="PRO_0000015747" description="C peptide">
    <location>
        <begin position="33"/>
        <end position="58"/>
    </location>
</feature>
<feature type="peptide" id="PRO_0000015748" description="Insulin A chain" evidence="1">
    <location>
        <begin position="61"/>
        <end position="81"/>
    </location>
</feature>
<feature type="disulfide bond" description="Interchain (between B and A chains)">
    <location>
        <begin position="7"/>
        <end position="67"/>
    </location>
</feature>
<feature type="disulfide bond" description="Interchain (between B and A chains)">
    <location>
        <begin position="19"/>
        <end position="80"/>
    </location>
</feature>
<feature type="disulfide bond">
    <location>
        <begin position="66"/>
        <end position="71"/>
    </location>
</feature>
<evidence type="ECO:0000269" key="1">
    <source>
    </source>
</evidence>
<evidence type="ECO:0000305" key="2"/>
<proteinExistence type="evidence at protein level"/>
<keyword id="KW-0119">Carbohydrate metabolism</keyword>
<keyword id="KW-0903">Direct protein sequencing</keyword>
<keyword id="KW-1015">Disulfide bond</keyword>
<keyword id="KW-0313">Glucose metabolism</keyword>
<keyword id="KW-0372">Hormone</keyword>
<keyword id="KW-0964">Secreted</keyword>
<sequence length="81" mass="9105">AANQHLCGSHLVEALYLVCGERGFFYSPKTXXDVEQPLVNGPLHGEVGELPFQHEEYQXXGIVEQCCENPCSLYQLENYCN</sequence>
<gene>
    <name type="primary">INS</name>
</gene>
<name>INS_ANAPL</name>
<organism>
    <name type="scientific">Anas platyrhynchos</name>
    <name type="common">Mallard</name>
    <name type="synonym">Anas boschas</name>
    <dbReference type="NCBI Taxonomy" id="8839"/>
    <lineage>
        <taxon>Eukaryota</taxon>
        <taxon>Metazoa</taxon>
        <taxon>Chordata</taxon>
        <taxon>Craniata</taxon>
        <taxon>Vertebrata</taxon>
        <taxon>Euteleostomi</taxon>
        <taxon>Archelosauria</taxon>
        <taxon>Archosauria</taxon>
        <taxon>Dinosauria</taxon>
        <taxon>Saurischia</taxon>
        <taxon>Theropoda</taxon>
        <taxon>Coelurosauria</taxon>
        <taxon>Aves</taxon>
        <taxon>Neognathae</taxon>
        <taxon>Galloanserae</taxon>
        <taxon>Anseriformes</taxon>
        <taxon>Anatidae</taxon>
        <taxon>Anatinae</taxon>
        <taxon>Anas</taxon>
    </lineage>
</organism>
<reference key="1">
    <citation type="journal article" date="1973" name="Int. J. Pept. Protein Res.">
        <title>Duck insulin: isolation, crystallization and amino acid sequence.</title>
        <authorList>
            <person name="Markussen J."/>
            <person name="Sundby F."/>
        </authorList>
    </citation>
    <scope>PROTEIN SEQUENCE OF 1-30 AND 61-81</scope>
</reference>
<reference key="2">
    <citation type="journal article" date="1973" name="Eur. J. Biochem.">
        <title>Isolation and amino-acid sequence of the C-peptide of duck proinsulin.</title>
        <authorList>
            <person name="Markussen J."/>
            <person name="Sundby F."/>
        </authorList>
    </citation>
    <scope>PROTEIN SEQUENCE OF 33-58</scope>
</reference>
<dbReference type="PIR" id="A01600">
    <property type="entry name" value="IPDK"/>
</dbReference>
<dbReference type="Proteomes" id="UP000694400">
    <property type="component" value="Unplaced"/>
</dbReference>
<dbReference type="GO" id="GO:0005615">
    <property type="term" value="C:extracellular space"/>
    <property type="evidence" value="ECO:0007669"/>
    <property type="project" value="TreeGrafter"/>
</dbReference>
<dbReference type="GO" id="GO:0005179">
    <property type="term" value="F:hormone activity"/>
    <property type="evidence" value="ECO:0007669"/>
    <property type="project" value="UniProtKB-KW"/>
</dbReference>
<dbReference type="GO" id="GO:0006006">
    <property type="term" value="P:glucose metabolic process"/>
    <property type="evidence" value="ECO:0007669"/>
    <property type="project" value="UniProtKB-KW"/>
</dbReference>
<dbReference type="CDD" id="cd04367">
    <property type="entry name" value="IlGF_insulin_like"/>
    <property type="match status" value="1"/>
</dbReference>
<dbReference type="FunFam" id="1.10.100.10:FF:000003">
    <property type="entry name" value="Insulin"/>
    <property type="match status" value="1"/>
</dbReference>
<dbReference type="Gene3D" id="1.10.100.10">
    <property type="entry name" value="Insulin-like"/>
    <property type="match status" value="1"/>
</dbReference>
<dbReference type="InterPro" id="IPR004825">
    <property type="entry name" value="Insulin"/>
</dbReference>
<dbReference type="InterPro" id="IPR016179">
    <property type="entry name" value="Insulin-like"/>
</dbReference>
<dbReference type="InterPro" id="IPR036438">
    <property type="entry name" value="Insulin-like_sf"/>
</dbReference>
<dbReference type="InterPro" id="IPR022353">
    <property type="entry name" value="Insulin_CS"/>
</dbReference>
<dbReference type="InterPro" id="IPR022352">
    <property type="entry name" value="Insulin_family"/>
</dbReference>
<dbReference type="PANTHER" id="PTHR11454:SF9">
    <property type="entry name" value="INSULIN"/>
    <property type="match status" value="1"/>
</dbReference>
<dbReference type="PANTHER" id="PTHR11454">
    <property type="entry name" value="INSULIN/INSULIN GROWTH FACTOR"/>
    <property type="match status" value="1"/>
</dbReference>
<dbReference type="Pfam" id="PF00049">
    <property type="entry name" value="Insulin"/>
    <property type="match status" value="1"/>
</dbReference>
<dbReference type="PRINTS" id="PR00277">
    <property type="entry name" value="INSULIN"/>
</dbReference>
<dbReference type="PRINTS" id="PR00276">
    <property type="entry name" value="INSULINFAMLY"/>
</dbReference>
<dbReference type="SMART" id="SM00078">
    <property type="entry name" value="IlGF"/>
    <property type="match status" value="1"/>
</dbReference>
<dbReference type="SUPFAM" id="SSF56994">
    <property type="entry name" value="Insulin-like"/>
    <property type="match status" value="1"/>
</dbReference>
<dbReference type="PROSITE" id="PS00262">
    <property type="entry name" value="INSULIN"/>
    <property type="match status" value="1"/>
</dbReference>